<evidence type="ECO:0000255" key="1">
    <source>
        <dbReference type="PROSITE-ProRule" id="PRU00977"/>
    </source>
</evidence>
<sequence length="245" mass="28866">MRKGYIYVIENNFDNHVYIGSTVDSLENRFRRHKADALKRPSCLFHTYMKKHGVDNFVIKLLKEVEIISILDLHLLEQNFIKDYGTLNTLHGKLKNLEINDKPTNVVLSKQTPFFTTIEPNIVKTEDVLKEITTNPSISLKELIDIFIEEEQNFGTILNEMTCQHKIYISKKLLKWIGYEGDYKKQRDSFKKLLKRHNIDFEELKSNDIECENYPEIKVDMANLSNGVISQSKWLILNIYNFKYI</sequence>
<protein>
    <recommendedName>
        <fullName>Putative MSV199 domain-containing protein 146R</fullName>
    </recommendedName>
</protein>
<organismHost>
    <name type="scientific">Acheta domesticus</name>
    <name type="common">House cricket</name>
    <dbReference type="NCBI Taxonomy" id="6997"/>
</organismHost>
<organismHost>
    <name type="scientific">Chilo suppressalis</name>
    <name type="common">Asiatic rice borer moth</name>
    <dbReference type="NCBI Taxonomy" id="168631"/>
</organismHost>
<organismHost>
    <name type="scientific">Gryllus bimaculatus</name>
    <name type="common">Two-spotted cricket</name>
    <dbReference type="NCBI Taxonomy" id="6999"/>
</organismHost>
<organismHost>
    <name type="scientific">Gryllus campestris</name>
    <dbReference type="NCBI Taxonomy" id="58607"/>
</organismHost>
<organismHost>
    <name type="scientific">Spodoptera frugiperda</name>
    <name type="common">Fall armyworm</name>
    <dbReference type="NCBI Taxonomy" id="7108"/>
</organismHost>
<gene>
    <name type="ORF">IIV6-146R</name>
</gene>
<proteinExistence type="predicted"/>
<name>146R_IIV6</name>
<feature type="chain" id="PRO_0000377917" description="Putative MSV199 domain-containing protein 146R">
    <location>
        <begin position="1"/>
        <end position="245"/>
    </location>
</feature>
<feature type="domain" description="GIY-YIG" evidence="1">
    <location>
        <begin position="2"/>
        <end position="97"/>
    </location>
</feature>
<organism>
    <name type="scientific">Invertebrate iridescent virus 6</name>
    <name type="common">IIV-6</name>
    <name type="synonym">Chilo iridescent virus</name>
    <dbReference type="NCBI Taxonomy" id="176652"/>
    <lineage>
        <taxon>Viruses</taxon>
        <taxon>Varidnaviria</taxon>
        <taxon>Bamfordvirae</taxon>
        <taxon>Nucleocytoviricota</taxon>
        <taxon>Megaviricetes</taxon>
        <taxon>Pimascovirales</taxon>
        <taxon>Iridoviridae</taxon>
        <taxon>Betairidovirinae</taxon>
        <taxon>Iridovirus</taxon>
    </lineage>
</organism>
<accession>O55751</accession>
<keyword id="KW-1185">Reference proteome</keyword>
<reference key="1">
    <citation type="journal article" date="2001" name="Virology">
        <title>Analysis of the first complete DNA sequence of an invertebrate iridovirus: coding strategy of the genome of Chilo iridescent virus.</title>
        <authorList>
            <person name="Jakob N.J."/>
            <person name="Mueller K."/>
            <person name="Bahr U."/>
            <person name="Darai G."/>
        </authorList>
    </citation>
    <scope>NUCLEOTIDE SEQUENCE [LARGE SCALE GENOMIC DNA]</scope>
</reference>
<reference key="2">
    <citation type="journal article" date="2007" name="Virol. J.">
        <title>Comparative genomic analysis of the family Iridoviridae: re-annotating and defining the core set of iridovirus genes.</title>
        <authorList>
            <person name="Eaton H.E."/>
            <person name="Metcalf J."/>
            <person name="Penny E."/>
            <person name="Tcherepanov V."/>
            <person name="Upton C."/>
            <person name="Brunetti C.R."/>
        </authorList>
    </citation>
    <scope>GENOME REANNOTATION</scope>
</reference>
<dbReference type="EMBL" id="AF303741">
    <property type="protein sequence ID" value="AAB94462.1"/>
    <property type="molecule type" value="Genomic_DNA"/>
</dbReference>
<dbReference type="PIR" id="T03088">
    <property type="entry name" value="T03088"/>
</dbReference>
<dbReference type="RefSeq" id="NP_149609.1">
    <property type="nucleotide sequence ID" value="NC_003038.1"/>
</dbReference>
<dbReference type="SMR" id="O55751"/>
<dbReference type="KEGG" id="vg:1733101"/>
<dbReference type="OrthoDB" id="33972at10239"/>
<dbReference type="Proteomes" id="UP000001359">
    <property type="component" value="Genome"/>
</dbReference>
<dbReference type="CDD" id="cd10443">
    <property type="entry name" value="GIY-YIG_HE_Tlr8p_PBC-V_like"/>
    <property type="match status" value="1"/>
</dbReference>
<dbReference type="Gene3D" id="3.40.1440.10">
    <property type="entry name" value="GIY-YIG endonuclease"/>
    <property type="match status" value="1"/>
</dbReference>
<dbReference type="InterPro" id="IPR000305">
    <property type="entry name" value="GIY-YIG_endonuc"/>
</dbReference>
<dbReference type="InterPro" id="IPR035901">
    <property type="entry name" value="GIY-YIG_endonuc_sf"/>
</dbReference>
<dbReference type="InterPro" id="IPR018879">
    <property type="entry name" value="MSV199_dom"/>
</dbReference>
<dbReference type="Pfam" id="PF01541">
    <property type="entry name" value="GIY-YIG"/>
    <property type="match status" value="1"/>
</dbReference>
<dbReference type="Pfam" id="PF10553">
    <property type="entry name" value="MSV199"/>
    <property type="match status" value="1"/>
</dbReference>
<dbReference type="SMART" id="SM00465">
    <property type="entry name" value="GIYc"/>
    <property type="match status" value="1"/>
</dbReference>
<dbReference type="SUPFAM" id="SSF82771">
    <property type="entry name" value="GIY-YIG endonuclease"/>
    <property type="match status" value="1"/>
</dbReference>
<dbReference type="PROSITE" id="PS50164">
    <property type="entry name" value="GIY_YIG"/>
    <property type="match status" value="1"/>
</dbReference>